<gene>
    <name evidence="1" type="primary">plsY</name>
    <name type="ordered locus">DP0538</name>
</gene>
<evidence type="ECO:0000255" key="1">
    <source>
        <dbReference type="HAMAP-Rule" id="MF_01043"/>
    </source>
</evidence>
<protein>
    <recommendedName>
        <fullName evidence="1">Glycerol-3-phosphate acyltransferase</fullName>
    </recommendedName>
    <alternativeName>
        <fullName evidence="1">Acyl-PO4 G3P acyltransferase</fullName>
    </alternativeName>
    <alternativeName>
        <fullName evidence="1">Acyl-phosphate--glycerol-3-phosphate acyltransferase</fullName>
    </alternativeName>
    <alternativeName>
        <fullName evidence="1">G3P acyltransferase</fullName>
        <shortName evidence="1">GPAT</shortName>
        <ecNumber evidence="1">2.3.1.275</ecNumber>
    </alternativeName>
    <alternativeName>
        <fullName evidence="1">Lysophosphatidic acid synthase</fullName>
        <shortName evidence="1">LPA synthase</shortName>
    </alternativeName>
</protein>
<proteinExistence type="inferred from homology"/>
<feature type="chain" id="PRO_0000188361" description="Glycerol-3-phosphate acyltransferase">
    <location>
        <begin position="1"/>
        <end position="197"/>
    </location>
</feature>
<feature type="transmembrane region" description="Helical" evidence="1">
    <location>
        <begin position="1"/>
        <end position="21"/>
    </location>
</feature>
<feature type="transmembrane region" description="Helical" evidence="1">
    <location>
        <begin position="50"/>
        <end position="70"/>
    </location>
</feature>
<feature type="transmembrane region" description="Helical" evidence="1">
    <location>
        <begin position="82"/>
        <end position="102"/>
    </location>
</feature>
<feature type="transmembrane region" description="Helical" evidence="1">
    <location>
        <begin position="112"/>
        <end position="132"/>
    </location>
</feature>
<feature type="transmembrane region" description="Helical" evidence="1">
    <location>
        <begin position="159"/>
        <end position="179"/>
    </location>
</feature>
<accession>Q6AQV6</accession>
<reference key="1">
    <citation type="journal article" date="2004" name="Environ. Microbiol.">
        <title>The genome of Desulfotalea psychrophila, a sulfate-reducing bacterium from permanently cold Arctic sediments.</title>
        <authorList>
            <person name="Rabus R."/>
            <person name="Ruepp A."/>
            <person name="Frickey T."/>
            <person name="Rattei T."/>
            <person name="Fartmann B."/>
            <person name="Stark M."/>
            <person name="Bauer M."/>
            <person name="Zibat A."/>
            <person name="Lombardot T."/>
            <person name="Becker I."/>
            <person name="Amann J."/>
            <person name="Gellner K."/>
            <person name="Teeling H."/>
            <person name="Leuschner W.D."/>
            <person name="Gloeckner F.-O."/>
            <person name="Lupas A.N."/>
            <person name="Amann R."/>
            <person name="Klenk H.-P."/>
        </authorList>
    </citation>
    <scope>NUCLEOTIDE SEQUENCE [LARGE SCALE GENOMIC DNA]</scope>
    <source>
        <strain>DSM 12343 / LSv54</strain>
    </source>
</reference>
<dbReference type="EC" id="2.3.1.275" evidence="1"/>
<dbReference type="EMBL" id="CR522870">
    <property type="protein sequence ID" value="CAG35267.1"/>
    <property type="molecule type" value="Genomic_DNA"/>
</dbReference>
<dbReference type="RefSeq" id="WP_011187783.1">
    <property type="nucleotide sequence ID" value="NC_006138.1"/>
</dbReference>
<dbReference type="SMR" id="Q6AQV6"/>
<dbReference type="STRING" id="177439.DP0538"/>
<dbReference type="KEGG" id="dps:DP0538"/>
<dbReference type="eggNOG" id="COG0344">
    <property type="taxonomic scope" value="Bacteria"/>
</dbReference>
<dbReference type="HOGENOM" id="CLU_081254_7_1_7"/>
<dbReference type="OrthoDB" id="9777124at2"/>
<dbReference type="UniPathway" id="UPA00085"/>
<dbReference type="Proteomes" id="UP000000602">
    <property type="component" value="Chromosome"/>
</dbReference>
<dbReference type="GO" id="GO:0005886">
    <property type="term" value="C:plasma membrane"/>
    <property type="evidence" value="ECO:0007669"/>
    <property type="project" value="UniProtKB-SubCell"/>
</dbReference>
<dbReference type="GO" id="GO:0043772">
    <property type="term" value="F:acyl-phosphate glycerol-3-phosphate acyltransferase activity"/>
    <property type="evidence" value="ECO:0007669"/>
    <property type="project" value="UniProtKB-UniRule"/>
</dbReference>
<dbReference type="GO" id="GO:0008654">
    <property type="term" value="P:phospholipid biosynthetic process"/>
    <property type="evidence" value="ECO:0007669"/>
    <property type="project" value="UniProtKB-UniRule"/>
</dbReference>
<dbReference type="HAMAP" id="MF_01043">
    <property type="entry name" value="PlsY"/>
    <property type="match status" value="1"/>
</dbReference>
<dbReference type="InterPro" id="IPR003811">
    <property type="entry name" value="G3P_acylTferase_PlsY"/>
</dbReference>
<dbReference type="NCBIfam" id="TIGR00023">
    <property type="entry name" value="glycerol-3-phosphate 1-O-acyltransferase PlsY"/>
    <property type="match status" value="1"/>
</dbReference>
<dbReference type="PANTHER" id="PTHR30309:SF0">
    <property type="entry name" value="GLYCEROL-3-PHOSPHATE ACYLTRANSFERASE-RELATED"/>
    <property type="match status" value="1"/>
</dbReference>
<dbReference type="PANTHER" id="PTHR30309">
    <property type="entry name" value="INNER MEMBRANE PROTEIN YGIH"/>
    <property type="match status" value="1"/>
</dbReference>
<dbReference type="Pfam" id="PF02660">
    <property type="entry name" value="G3P_acyltransf"/>
    <property type="match status" value="1"/>
</dbReference>
<dbReference type="SMART" id="SM01207">
    <property type="entry name" value="G3P_acyltransf"/>
    <property type="match status" value="1"/>
</dbReference>
<keyword id="KW-0997">Cell inner membrane</keyword>
<keyword id="KW-1003">Cell membrane</keyword>
<keyword id="KW-0444">Lipid biosynthesis</keyword>
<keyword id="KW-0443">Lipid metabolism</keyword>
<keyword id="KW-0472">Membrane</keyword>
<keyword id="KW-0594">Phospholipid biosynthesis</keyword>
<keyword id="KW-1208">Phospholipid metabolism</keyword>
<keyword id="KW-1185">Reference proteome</keyword>
<keyword id="KW-0808">Transferase</keyword>
<keyword id="KW-0812">Transmembrane</keyword>
<keyword id="KW-1133">Transmembrane helix</keyword>
<comment type="function">
    <text evidence="1">Catalyzes the transfer of an acyl group from acyl-phosphate (acyl-PO(4)) to glycerol-3-phosphate (G3P) to form lysophosphatidic acid (LPA). This enzyme utilizes acyl-phosphate as fatty acyl donor, but not acyl-CoA or acyl-ACP.</text>
</comment>
<comment type="catalytic activity">
    <reaction evidence="1">
        <text>an acyl phosphate + sn-glycerol 3-phosphate = a 1-acyl-sn-glycero-3-phosphate + phosphate</text>
        <dbReference type="Rhea" id="RHEA:34075"/>
        <dbReference type="ChEBI" id="CHEBI:43474"/>
        <dbReference type="ChEBI" id="CHEBI:57597"/>
        <dbReference type="ChEBI" id="CHEBI:57970"/>
        <dbReference type="ChEBI" id="CHEBI:59918"/>
        <dbReference type="EC" id="2.3.1.275"/>
    </reaction>
</comment>
<comment type="pathway">
    <text evidence="1">Lipid metabolism; phospholipid metabolism.</text>
</comment>
<comment type="subunit">
    <text evidence="1">Probably interacts with PlsX.</text>
</comment>
<comment type="subcellular location">
    <subcellularLocation>
        <location evidence="1">Cell inner membrane</location>
        <topology evidence="1">Multi-pass membrane protein</topology>
    </subcellularLocation>
</comment>
<comment type="similarity">
    <text evidence="1">Belongs to the PlsY family.</text>
</comment>
<organism>
    <name type="scientific">Desulfotalea psychrophila (strain LSv54 / DSM 12343)</name>
    <dbReference type="NCBI Taxonomy" id="177439"/>
    <lineage>
        <taxon>Bacteria</taxon>
        <taxon>Pseudomonadati</taxon>
        <taxon>Thermodesulfobacteriota</taxon>
        <taxon>Desulfobulbia</taxon>
        <taxon>Desulfobulbales</taxon>
        <taxon>Desulfocapsaceae</taxon>
        <taxon>Desulfotalea</taxon>
    </lineage>
</organism>
<name>PLSY_DESPS</name>
<sequence>MDFIFPLISYLLGAIPFGLLIGKLAGRDVRLEGSKNIGATNVSRILGKKLGFATLLCDSLKGFLPMVLAATLLPSSENRELIVCLSGVMGVLGHMFPVYLGFKGGKGVATGLGVFLFLSPAAIAISLGVFAASVFFSGFVSVGSLLASGLIPLWLYLLGASQLKIITAGFVALLIWIKHRKNIKRLMTGTEKSWKKK</sequence>